<gene>
    <name evidence="2" type="primary">sthA</name>
    <name type="ordered locus">PP_2151</name>
</gene>
<proteinExistence type="inferred from homology"/>
<sequence length="464" mass="50906">MAVYNYDVVVLGSGPAGEGAAMNAAKAGRKVAMVDDRRQVGGNCTHLGTIPSKALRHSVRQIMQFNTNPMFRAIGEPRWFSFPDVLKSAEKVIAKQVASRTGYYARNRVDVFVGTGSFADEQTVEVVCPNGVVEKLNAKHIIIATGSRPYRPADIDFHHPRVYDSDTILSLSHTPRKLIVYGAGVIGCEYASIFSGLGVLVELVDNRGQLLSFLDSEISQALSYHFSNNNITVRHNEEYERVEGLDNGVILHLKSGKKIKADALLWCNGRTGNTDKLGLENIGIKVNSRGQIEVDEAYRTTVPNIYGAGDVIGWPSLASAAHDQGRSAAGSIVDNGSWRFVNDVPTGIYTIPEISSIGKNEQELTQAKVPYEVGKAFFKSMARAQIAGEPQGMLKILFHRETLEILGVHCFGYQASEIVHIGQAIMNQPGEQNNLKYFVNTTFNYPTMAEAYRVAAYDGLNRLF</sequence>
<evidence type="ECO:0000250" key="1"/>
<evidence type="ECO:0000255" key="2">
    <source>
        <dbReference type="HAMAP-Rule" id="MF_00247"/>
    </source>
</evidence>
<comment type="function">
    <text evidence="2">Conversion of NADPH, generated by peripheral catabolic pathways, to NADH, which can enter the respiratory chain for energy generation.</text>
</comment>
<comment type="catalytic activity">
    <reaction evidence="2">
        <text>NAD(+) + NADPH = NADH + NADP(+)</text>
        <dbReference type="Rhea" id="RHEA:11692"/>
        <dbReference type="ChEBI" id="CHEBI:57540"/>
        <dbReference type="ChEBI" id="CHEBI:57783"/>
        <dbReference type="ChEBI" id="CHEBI:57945"/>
        <dbReference type="ChEBI" id="CHEBI:58349"/>
        <dbReference type="EC" id="1.6.1.1"/>
    </reaction>
</comment>
<comment type="cofactor">
    <cofactor evidence="2">
        <name>FAD</name>
        <dbReference type="ChEBI" id="CHEBI:57692"/>
    </cofactor>
    <text evidence="2">Binds 1 FAD per subunit.</text>
</comment>
<comment type="subcellular location">
    <subcellularLocation>
        <location evidence="2">Cytoplasm</location>
    </subcellularLocation>
</comment>
<comment type="similarity">
    <text evidence="2">Belongs to the class-I pyridine nucleotide-disulfide oxidoreductase family.</text>
</comment>
<feature type="initiator methionine" description="Removed" evidence="1">
    <location>
        <position position="1"/>
    </location>
</feature>
<feature type="chain" id="PRO_0000068070" description="Soluble pyridine nucleotide transhydrogenase">
    <location>
        <begin position="2"/>
        <end position="464"/>
    </location>
</feature>
<feature type="binding site" evidence="2">
    <location>
        <begin position="35"/>
        <end position="44"/>
    </location>
    <ligand>
        <name>FAD</name>
        <dbReference type="ChEBI" id="CHEBI:57692"/>
    </ligand>
</feature>
<dbReference type="EC" id="1.6.1.1" evidence="2"/>
<dbReference type="EMBL" id="AE015451">
    <property type="protein sequence ID" value="AAN67764.1"/>
    <property type="molecule type" value="Genomic_DNA"/>
</dbReference>
<dbReference type="RefSeq" id="NP_744300.1">
    <property type="nucleotide sequence ID" value="NC_002947.4"/>
</dbReference>
<dbReference type="RefSeq" id="WP_010953139.1">
    <property type="nucleotide sequence ID" value="NZ_CP169744.1"/>
</dbReference>
<dbReference type="SMR" id="Q88KY8"/>
<dbReference type="STRING" id="160488.PP_2151"/>
<dbReference type="PaxDb" id="160488-PP_2151"/>
<dbReference type="GeneID" id="83681328"/>
<dbReference type="KEGG" id="ppu:PP_2151"/>
<dbReference type="PATRIC" id="fig|160488.4.peg.2268"/>
<dbReference type="eggNOG" id="COG1249">
    <property type="taxonomic scope" value="Bacteria"/>
</dbReference>
<dbReference type="HOGENOM" id="CLU_016755_0_0_6"/>
<dbReference type="OrthoDB" id="9800167at2"/>
<dbReference type="PhylomeDB" id="Q88KY8"/>
<dbReference type="BioCyc" id="PPUT160488:G1G01-2292-MONOMER"/>
<dbReference type="Proteomes" id="UP000000556">
    <property type="component" value="Chromosome"/>
</dbReference>
<dbReference type="GO" id="GO:0005829">
    <property type="term" value="C:cytosol"/>
    <property type="evidence" value="ECO:0007669"/>
    <property type="project" value="TreeGrafter"/>
</dbReference>
<dbReference type="GO" id="GO:0004148">
    <property type="term" value="F:dihydrolipoyl dehydrogenase (NADH) activity"/>
    <property type="evidence" value="ECO:0007669"/>
    <property type="project" value="TreeGrafter"/>
</dbReference>
<dbReference type="GO" id="GO:0050660">
    <property type="term" value="F:flavin adenine dinucleotide binding"/>
    <property type="evidence" value="ECO:0007669"/>
    <property type="project" value="TreeGrafter"/>
</dbReference>
<dbReference type="GO" id="GO:0003957">
    <property type="term" value="F:NAD(P)+ transhydrogenase (Si-specific) activity"/>
    <property type="evidence" value="ECO:0007669"/>
    <property type="project" value="UniProtKB-UniRule"/>
</dbReference>
<dbReference type="GO" id="GO:0006103">
    <property type="term" value="P:2-oxoglutarate metabolic process"/>
    <property type="evidence" value="ECO:0007669"/>
    <property type="project" value="TreeGrafter"/>
</dbReference>
<dbReference type="GO" id="GO:0006739">
    <property type="term" value="P:NADP metabolic process"/>
    <property type="evidence" value="ECO:0007669"/>
    <property type="project" value="UniProtKB-UniRule"/>
</dbReference>
<dbReference type="FunFam" id="3.30.390.30:FF:000002">
    <property type="entry name" value="Soluble pyridine nucleotide transhydrogenase"/>
    <property type="match status" value="1"/>
</dbReference>
<dbReference type="FunFam" id="3.50.50.60:FF:000008">
    <property type="entry name" value="Soluble pyridine nucleotide transhydrogenase"/>
    <property type="match status" value="1"/>
</dbReference>
<dbReference type="Gene3D" id="3.30.390.30">
    <property type="match status" value="1"/>
</dbReference>
<dbReference type="Gene3D" id="3.50.50.60">
    <property type="entry name" value="FAD/NAD(P)-binding domain"/>
    <property type="match status" value="2"/>
</dbReference>
<dbReference type="HAMAP" id="MF_00247">
    <property type="entry name" value="SthA"/>
    <property type="match status" value="1"/>
</dbReference>
<dbReference type="InterPro" id="IPR050151">
    <property type="entry name" value="Class-I_Pyr_Nuc-Dis_Oxidored"/>
</dbReference>
<dbReference type="InterPro" id="IPR036188">
    <property type="entry name" value="FAD/NAD-bd_sf"/>
</dbReference>
<dbReference type="InterPro" id="IPR023753">
    <property type="entry name" value="FAD/NAD-binding_dom"/>
</dbReference>
<dbReference type="InterPro" id="IPR016156">
    <property type="entry name" value="FAD/NAD-linked_Rdtase_dimer_sf"/>
</dbReference>
<dbReference type="InterPro" id="IPR001100">
    <property type="entry name" value="Pyr_nuc-diS_OxRdtase"/>
</dbReference>
<dbReference type="InterPro" id="IPR004099">
    <property type="entry name" value="Pyr_nucl-diS_OxRdtase_dimer"/>
</dbReference>
<dbReference type="InterPro" id="IPR022962">
    <property type="entry name" value="STH_gammaproteobact"/>
</dbReference>
<dbReference type="NCBIfam" id="NF003585">
    <property type="entry name" value="PRK05249.1"/>
    <property type="match status" value="1"/>
</dbReference>
<dbReference type="PANTHER" id="PTHR22912">
    <property type="entry name" value="DISULFIDE OXIDOREDUCTASE"/>
    <property type="match status" value="1"/>
</dbReference>
<dbReference type="PANTHER" id="PTHR22912:SF93">
    <property type="entry name" value="SOLUBLE PYRIDINE NUCLEOTIDE TRANSHYDROGENASE"/>
    <property type="match status" value="1"/>
</dbReference>
<dbReference type="Pfam" id="PF07992">
    <property type="entry name" value="Pyr_redox_2"/>
    <property type="match status" value="1"/>
</dbReference>
<dbReference type="Pfam" id="PF02852">
    <property type="entry name" value="Pyr_redox_dim"/>
    <property type="match status" value="1"/>
</dbReference>
<dbReference type="PIRSF" id="PIRSF000350">
    <property type="entry name" value="Mercury_reductase_MerA"/>
    <property type="match status" value="1"/>
</dbReference>
<dbReference type="PRINTS" id="PR00368">
    <property type="entry name" value="FADPNR"/>
</dbReference>
<dbReference type="PRINTS" id="PR00411">
    <property type="entry name" value="PNDRDTASEI"/>
</dbReference>
<dbReference type="SUPFAM" id="SSF51905">
    <property type="entry name" value="FAD/NAD(P)-binding domain"/>
    <property type="match status" value="1"/>
</dbReference>
<dbReference type="SUPFAM" id="SSF55424">
    <property type="entry name" value="FAD/NAD-linked reductases, dimerisation (C-terminal) domain"/>
    <property type="match status" value="1"/>
</dbReference>
<protein>
    <recommendedName>
        <fullName evidence="2">Soluble pyridine nucleotide transhydrogenase</fullName>
        <shortName evidence="2">STH</shortName>
        <ecNumber evidence="2">1.6.1.1</ecNumber>
    </recommendedName>
    <alternativeName>
        <fullName evidence="2">NAD(P)(+) transhydrogenase [B-specific]</fullName>
    </alternativeName>
</protein>
<organism>
    <name type="scientific">Pseudomonas putida (strain ATCC 47054 / DSM 6125 / CFBP 8728 / NCIMB 11950 / KT2440)</name>
    <dbReference type="NCBI Taxonomy" id="160488"/>
    <lineage>
        <taxon>Bacteria</taxon>
        <taxon>Pseudomonadati</taxon>
        <taxon>Pseudomonadota</taxon>
        <taxon>Gammaproteobacteria</taxon>
        <taxon>Pseudomonadales</taxon>
        <taxon>Pseudomonadaceae</taxon>
        <taxon>Pseudomonas</taxon>
    </lineage>
</organism>
<keyword id="KW-0963">Cytoplasm</keyword>
<keyword id="KW-0274">FAD</keyword>
<keyword id="KW-0285">Flavoprotein</keyword>
<keyword id="KW-0520">NAD</keyword>
<keyword id="KW-0521">NADP</keyword>
<keyword id="KW-0560">Oxidoreductase</keyword>
<keyword id="KW-1185">Reference proteome</keyword>
<accession>Q88KY8</accession>
<name>STHA_PSEPK</name>
<reference key="1">
    <citation type="journal article" date="2002" name="Environ. Microbiol.">
        <title>Complete genome sequence and comparative analysis of the metabolically versatile Pseudomonas putida KT2440.</title>
        <authorList>
            <person name="Nelson K.E."/>
            <person name="Weinel C."/>
            <person name="Paulsen I.T."/>
            <person name="Dodson R.J."/>
            <person name="Hilbert H."/>
            <person name="Martins dos Santos V.A.P."/>
            <person name="Fouts D.E."/>
            <person name="Gill S.R."/>
            <person name="Pop M."/>
            <person name="Holmes M."/>
            <person name="Brinkac L.M."/>
            <person name="Beanan M.J."/>
            <person name="DeBoy R.T."/>
            <person name="Daugherty S.C."/>
            <person name="Kolonay J.F."/>
            <person name="Madupu R."/>
            <person name="Nelson W.C."/>
            <person name="White O."/>
            <person name="Peterson J.D."/>
            <person name="Khouri H.M."/>
            <person name="Hance I."/>
            <person name="Chris Lee P."/>
            <person name="Holtzapple E.K."/>
            <person name="Scanlan D."/>
            <person name="Tran K."/>
            <person name="Moazzez A."/>
            <person name="Utterback T.R."/>
            <person name="Rizzo M."/>
            <person name="Lee K."/>
            <person name="Kosack D."/>
            <person name="Moestl D."/>
            <person name="Wedler H."/>
            <person name="Lauber J."/>
            <person name="Stjepandic D."/>
            <person name="Hoheisel J."/>
            <person name="Straetz M."/>
            <person name="Heim S."/>
            <person name="Kiewitz C."/>
            <person name="Eisen J.A."/>
            <person name="Timmis K.N."/>
            <person name="Duesterhoeft A."/>
            <person name="Tuemmler B."/>
            <person name="Fraser C.M."/>
        </authorList>
    </citation>
    <scope>NUCLEOTIDE SEQUENCE [LARGE SCALE GENOMIC DNA]</scope>
    <source>
        <strain>ATCC 47054 / DSM 6125 / CFBP 8728 / NCIMB 11950 / KT2440</strain>
    </source>
</reference>